<name>RIDA_ECOL6</name>
<feature type="initiator methionine" description="Removed" evidence="1">
    <location>
        <position position="1"/>
    </location>
</feature>
<feature type="chain" id="PRO_0000170322" description="2-iminobutanoate/2-iminopropanoate deaminase">
    <location>
        <begin position="2"/>
        <end position="128"/>
    </location>
</feature>
<feature type="active site" description="Phosphocysteine intermediate" evidence="1">
    <location>
        <position position="107"/>
    </location>
</feature>
<feature type="binding site" evidence="3">
    <location>
        <position position="105"/>
    </location>
    <ligand>
        <name>substrate</name>
    </ligand>
</feature>
<feature type="site" description="Stabilizes the substrate" evidence="3">
    <location>
        <position position="17"/>
    </location>
</feature>
<feature type="site" description="Important for catalytic activity at high pH" evidence="3">
    <location>
        <position position="120"/>
    </location>
</feature>
<proteinExistence type="inferred from homology"/>
<dbReference type="EC" id="3.5.99.10" evidence="3"/>
<dbReference type="EMBL" id="AE014075">
    <property type="protein sequence ID" value="AAN83763.1"/>
    <property type="status" value="ALT_INIT"/>
    <property type="molecule type" value="Genomic_DNA"/>
</dbReference>
<dbReference type="SMR" id="P0AF94"/>
<dbReference type="STRING" id="199310.c5342"/>
<dbReference type="KEGG" id="ecc:c5342"/>
<dbReference type="eggNOG" id="COG0251">
    <property type="taxonomic scope" value="Bacteria"/>
</dbReference>
<dbReference type="HOGENOM" id="CLU_100715_7_1_6"/>
<dbReference type="Proteomes" id="UP000001410">
    <property type="component" value="Chromosome"/>
</dbReference>
<dbReference type="GO" id="GO:0005829">
    <property type="term" value="C:cytosol"/>
    <property type="evidence" value="ECO:0007669"/>
    <property type="project" value="TreeGrafter"/>
</dbReference>
<dbReference type="GO" id="GO:0120242">
    <property type="term" value="F:2-iminobutanoate deaminase activity"/>
    <property type="evidence" value="ECO:0000250"/>
    <property type="project" value="UniProtKB"/>
</dbReference>
<dbReference type="GO" id="GO:0120243">
    <property type="term" value="F:2-iminopropanoate deaminase activity"/>
    <property type="evidence" value="ECO:0007669"/>
    <property type="project" value="RHEA"/>
</dbReference>
<dbReference type="GO" id="GO:0009097">
    <property type="term" value="P:isoleucine biosynthetic process"/>
    <property type="evidence" value="ECO:0007669"/>
    <property type="project" value="UniProtKB-KW"/>
</dbReference>
<dbReference type="GO" id="GO:0009636">
    <property type="term" value="P:response to toxic substance"/>
    <property type="evidence" value="ECO:0007669"/>
    <property type="project" value="UniProtKB-KW"/>
</dbReference>
<dbReference type="CDD" id="cd00448">
    <property type="entry name" value="YjgF_YER057c_UK114_family"/>
    <property type="match status" value="1"/>
</dbReference>
<dbReference type="FunFam" id="3.30.1330.40:FF:000001">
    <property type="entry name" value="L-PSP family endoribonuclease"/>
    <property type="match status" value="1"/>
</dbReference>
<dbReference type="Gene3D" id="3.30.1330.40">
    <property type="entry name" value="RutC-like"/>
    <property type="match status" value="1"/>
</dbReference>
<dbReference type="InterPro" id="IPR006056">
    <property type="entry name" value="RidA"/>
</dbReference>
<dbReference type="InterPro" id="IPR019897">
    <property type="entry name" value="RidA_CS"/>
</dbReference>
<dbReference type="InterPro" id="IPR035959">
    <property type="entry name" value="RutC-like_sf"/>
</dbReference>
<dbReference type="InterPro" id="IPR006175">
    <property type="entry name" value="YjgF/YER057c/UK114"/>
</dbReference>
<dbReference type="NCBIfam" id="TIGR00004">
    <property type="entry name" value="Rid family detoxifying hydrolase"/>
    <property type="match status" value="1"/>
</dbReference>
<dbReference type="PANTHER" id="PTHR11803">
    <property type="entry name" value="2-IMINOBUTANOATE/2-IMINOPROPANOATE DEAMINASE RIDA"/>
    <property type="match status" value="1"/>
</dbReference>
<dbReference type="PANTHER" id="PTHR11803:SF39">
    <property type="entry name" value="2-IMINOBUTANOATE_2-IMINOPROPANOATE DEAMINASE"/>
    <property type="match status" value="1"/>
</dbReference>
<dbReference type="Pfam" id="PF01042">
    <property type="entry name" value="Ribonuc_L-PSP"/>
    <property type="match status" value="1"/>
</dbReference>
<dbReference type="SUPFAM" id="SSF55298">
    <property type="entry name" value="YjgF-like"/>
    <property type="match status" value="1"/>
</dbReference>
<dbReference type="PROSITE" id="PS01094">
    <property type="entry name" value="UPF0076"/>
    <property type="match status" value="1"/>
</dbReference>
<reference key="1">
    <citation type="journal article" date="2002" name="Proc. Natl. Acad. Sci. U.S.A.">
        <title>Extensive mosaic structure revealed by the complete genome sequence of uropathogenic Escherichia coli.</title>
        <authorList>
            <person name="Welch R.A."/>
            <person name="Burland V."/>
            <person name="Plunkett G. III"/>
            <person name="Redford P."/>
            <person name="Roesch P."/>
            <person name="Rasko D."/>
            <person name="Buckles E.L."/>
            <person name="Liou S.-R."/>
            <person name="Boutin A."/>
            <person name="Hackett J."/>
            <person name="Stroud D."/>
            <person name="Mayhew G.F."/>
            <person name="Rose D.J."/>
            <person name="Zhou S."/>
            <person name="Schwartz D.C."/>
            <person name="Perna N.T."/>
            <person name="Mobley H.L.T."/>
            <person name="Donnenberg M.S."/>
            <person name="Blattner F.R."/>
        </authorList>
    </citation>
    <scope>NUCLEOTIDE SEQUENCE [LARGE SCALE GENOMIC DNA]</scope>
    <source>
        <strain>CFT073 / ATCC 700928 / UPEC</strain>
    </source>
</reference>
<sequence>MSKTIATENAPAAIGPYVQGVDLGNMIITSGQIPVNPKTGEVPADVAAQARQSLDNVKAIVEAAGLKVGDIVKTTVFVKDLNDFATVNATYEAFFTEHNATFPARSCVEVARLPKDVKIEIEAIAVRR</sequence>
<organism>
    <name type="scientific">Escherichia coli O6:H1 (strain CFT073 / ATCC 700928 / UPEC)</name>
    <dbReference type="NCBI Taxonomy" id="199310"/>
    <lineage>
        <taxon>Bacteria</taxon>
        <taxon>Pseudomonadati</taxon>
        <taxon>Pseudomonadota</taxon>
        <taxon>Gammaproteobacteria</taxon>
        <taxon>Enterobacterales</taxon>
        <taxon>Enterobacteriaceae</taxon>
        <taxon>Escherichia</taxon>
    </lineage>
</organism>
<evidence type="ECO:0000250" key="1"/>
<evidence type="ECO:0000250" key="2">
    <source>
        <dbReference type="UniProtKB" id="P0AF93"/>
    </source>
</evidence>
<evidence type="ECO:0000250" key="3">
    <source>
        <dbReference type="UniProtKB" id="Q7CP78"/>
    </source>
</evidence>
<evidence type="ECO:0000305" key="4"/>
<keyword id="KW-0028">Amino-acid biosynthesis</keyword>
<keyword id="KW-0100">Branched-chain amino acid biosynthesis</keyword>
<keyword id="KW-0963">Cytoplasm</keyword>
<keyword id="KW-0216">Detoxification</keyword>
<keyword id="KW-0378">Hydrolase</keyword>
<keyword id="KW-0412">Isoleucine biosynthesis</keyword>
<keyword id="KW-1185">Reference proteome</keyword>
<comment type="function">
    <text evidence="3">Accelerates the release of ammonia from reactive enamine/imine intermediates of the PLP-dependent threonine dehydratase (IlvA) in the low water environment of the cell. It catalyzes the deamination of enamine/imine intermediates to yield 2-ketobutyrate and ammonia. It is required for the detoxification of reactive intermediates of IlvA due to their highly nucleophilic abilities. Involved in the isoleucine biosynthesis.</text>
</comment>
<comment type="catalytic activity">
    <reaction evidence="3">
        <text>2-iminobutanoate + H2O = 2-oxobutanoate + NH4(+)</text>
        <dbReference type="Rhea" id="RHEA:39975"/>
        <dbReference type="ChEBI" id="CHEBI:15377"/>
        <dbReference type="ChEBI" id="CHEBI:16763"/>
        <dbReference type="ChEBI" id="CHEBI:28938"/>
        <dbReference type="ChEBI" id="CHEBI:76545"/>
        <dbReference type="EC" id="3.5.99.10"/>
    </reaction>
</comment>
<comment type="catalytic activity">
    <reaction>
        <text>2-iminopropanoate + H2O = pyruvate + NH4(+)</text>
        <dbReference type="Rhea" id="RHEA:40671"/>
        <dbReference type="ChEBI" id="CHEBI:15361"/>
        <dbReference type="ChEBI" id="CHEBI:15377"/>
        <dbReference type="ChEBI" id="CHEBI:28938"/>
        <dbReference type="ChEBI" id="CHEBI:44400"/>
        <dbReference type="EC" id="3.5.99.10"/>
    </reaction>
</comment>
<comment type="pathway">
    <text evidence="3">Amino-acid biosynthesis; L-isoleucine biosynthesis; 2-oxobutanoate from L-threonine.</text>
</comment>
<comment type="subunit">
    <text evidence="2">Homotrimer.</text>
</comment>
<comment type="subcellular location">
    <subcellularLocation>
        <location evidence="4">Cytoplasm</location>
    </subcellularLocation>
</comment>
<comment type="similarity">
    <text evidence="4">Belongs to the RutC family.</text>
</comment>
<comment type="sequence caution" evidence="4">
    <conflict type="erroneous initiation">
        <sequence resource="EMBL-CDS" id="AAN83763"/>
    </conflict>
    <text>Extended N-terminus.</text>
</comment>
<gene>
    <name type="primary">yjgF</name>
    <name type="ordered locus">c5342</name>
</gene>
<accession>P0AF94</accession>
<accession>P39330</accession>
<accession>P76806</accession>
<protein>
    <recommendedName>
        <fullName>2-iminobutanoate/2-iminopropanoate deaminase</fullName>
        <ecNumber evidence="3">3.5.99.10</ecNumber>
    </recommendedName>
    <alternativeName>
        <fullName>Enamine/imine deaminase</fullName>
    </alternativeName>
</protein>